<proteinExistence type="evidence at protein level"/>
<gene>
    <name type="primary">nr3c1</name>
    <name type="synonym">grl</name>
</gene>
<protein>
    <recommendedName>
        <fullName>Glucocorticoid receptor</fullName>
        <shortName>GR</shortName>
    </recommendedName>
    <alternativeName>
        <fullName>Nuclear receptor subfamily 3 group C member 1</fullName>
    </alternativeName>
</protein>
<organism>
    <name type="scientific">Oncorhynchus mykiss</name>
    <name type="common">Rainbow trout</name>
    <name type="synonym">Salmo gairdneri</name>
    <dbReference type="NCBI Taxonomy" id="8022"/>
    <lineage>
        <taxon>Eukaryota</taxon>
        <taxon>Metazoa</taxon>
        <taxon>Chordata</taxon>
        <taxon>Craniata</taxon>
        <taxon>Vertebrata</taxon>
        <taxon>Euteleostomi</taxon>
        <taxon>Actinopterygii</taxon>
        <taxon>Neopterygii</taxon>
        <taxon>Teleostei</taxon>
        <taxon>Protacanthopterygii</taxon>
        <taxon>Salmoniformes</taxon>
        <taxon>Salmonidae</taxon>
        <taxon>Salmoninae</taxon>
        <taxon>Oncorhynchus</taxon>
    </lineage>
</organism>
<accession>P49843</accession>
<sequence length="758" mass="83345">MDPGGLKHSKDKGLAFGKLSESSVEGSFSGDTGGSKSTTSTSLMHLPGSRPQPPARDSANGLNVTTTQMELSTGGLTIEEAEVKVMEKAIRMQQPQKPQQNQQLFENFALLEASIADLNRSNTPGSSVLGRPHDLFSLKTENFSPMDKDRLDMGSVSFGQSQKDLDVNERLLGDNTMDILQDLDLPGSLSDLNEFYVSDEAAFLSSLSVEDVLLEDGNMETKPIDCSNGGNCTNVDSADQQKQLLEAGVSMPVIKTEEDADTSFIQLCTPGVIKQENDRRSFCQISSLDLPSTHNSAGSISGPSYPYGANTSTAVSLQQDQKPVFGLYPPLPSVSDSWNRGNGYATGSGMSSSSFPVGFSSPKARPEASGSASSAPAKPSGPTHKICLVCSDEASGCHYGVLTCGSCKVFFKRAVEGWRARQNTDGQHNYLCAGRNDCIIDKIRRKNCPACRFRKCLQAGMNLEARKNKKLIRLKGQQTTMEPNPPPPDERACALIPKSMPQLVPTMLSLLKAIEPEAIYSGYDSTIPDTSTRLMTTLNRLGGQQVVSAVKWAKSLPGFRNLHLDDQMTLLQCSWLFLMSFGLGWRSYQQCNGGMLCFAPDLVINDERMKLPYMTDQCEQMLKISTEFVRLQVSYDEYLCMKVLLLLSTVPKDGLKSQAVFDEIRMTYIKELGKAIVKREENSSQNWQRFYQLTKLLDSMQEMVGGLLQICFYTFVNKSLSVEFPEMLAEIISNQLPKFKDGSVKPLLFHALNHDTMP</sequence>
<comment type="function">
    <text evidence="2 3 7 8">Receptor for glucocorticoids (GC) (PubMed:7649084, PubMed:8766708). Has a dual mode of action: as a transcription factor that binds to glucocorticoid response elements (GRE), both for nuclear and mitochondrial DNA, and as a modulator of other transcription factors (By similarity). Affects inflammatory responses, cellular proliferation and differentiation in target tissues (By similarity). Involved in chromatin remodeling (By similarity). Plays a role in rapid mRNA degradation by binding to the 5' UTR of target mRNAs and interacting with PNRC2 in a ligand-dependent manner which recruits the RNA helicase UPF1 and the mRNA-decapping enzyme DCP1A, leading to RNA decay (By similarity). Could act as a coactivator for STAT5-dependent transcription upon growth hormone (GH) stimulation and could reveal an essential role of hepatic GR in the control of body growth (By similarity). Mediates glucocorticoid-induced apoptosis (By similarity). Promotes accurate chromosome segregation during mitosis (By similarity). May act as a tumor suppressor (By similarity). May play a negative role in adipogenesis through the regulation of lipolytic and antilipogenic gene expression (By similarity).</text>
</comment>
<comment type="subunit">
    <text evidence="1">Heteromultimeric cytoplasmic complex with HSP90AA1, HSPA1A/HSPA1B, and FKBP5 or another immunophilin such as PPID, STIP1, or the immunophilin homolog PPP5C. Upon ligand binding FKBP5 dissociates from the complex and FKBP4 takes its place, thereby linking the complex to dynein and mediating transport to the nucleus, where the complex dissociates. Directly interacts with UNC45A. Binds to DNA as a homodimer, and as heterodimer with NR3C2 or the retinoid X receptor. Binds STAT5A and STAT5B homodimers and heterodimers. Interacts with NRIP1, POU2F1, POU2F2 and TRIM28. Interacts with several coactivator complexes, including the SMARCA4 complex, CREBBP/EP300, TADA2L (Ada complex) and p160 coactivators such as NCOA2 and NCOA6. Interaction with BAG1 inhibits transactivation. Interacts with HEXIM1, PELP1 and TGFB1I1. Interacts with NCOA1, NCOA3, SMARCA4, SMARCC1, SMARCD1, and SMARCE1 (By similarity).</text>
</comment>
<comment type="subcellular location">
    <subcellularLocation>
        <location evidence="2">Cytoplasm</location>
    </subcellularLocation>
    <subcellularLocation>
        <location evidence="2">Nucleus</location>
    </subcellularLocation>
    <subcellularLocation>
        <location evidence="2">Mitochondrion</location>
    </subcellularLocation>
    <subcellularLocation>
        <location evidence="2">Cytoplasm</location>
        <location evidence="2">Cytoskeleton</location>
        <location evidence="2">Spindle</location>
    </subcellularLocation>
    <subcellularLocation>
        <location evidence="2">Cytoplasm</location>
        <location evidence="2">Cytoskeleton</location>
        <location evidence="2">Microtubule organizing center</location>
        <location evidence="2">Centrosome</location>
    </subcellularLocation>
    <text evidence="2">After ligand activation, translocates from the cytoplasm to the nucleus.</text>
</comment>
<comment type="alternative products">
    <event type="alternative splicing"/>
    <isoform>
        <id>P49843-1</id>
        <name>1</name>
        <sequence type="displayed"/>
    </isoform>
    <isoform>
        <id>P49843-2</id>
        <name>2</name>
        <sequence type="described" ref="VSP_012542"/>
    </isoform>
</comment>
<comment type="tissue specificity">
    <text evidence="7 8">Isoform 1 is expressed in all tissues tested including liver, gills, intestine, skeletal muscle, kidney, heart, spleen, stomach, brain, pituitary, ovary, testis, skin and bladder. Isoform 2 is found only in testis.</text>
</comment>
<comment type="domain">
    <text evidence="2">Composed of three domains: a modulating N-terminal domain, a DNA-binding domain and a C-terminal ligand-binding domain. The ligand-binding domain is required for correct chromosome segregation during mitosis although ligand binding is not required.</text>
</comment>
<comment type="PTM">
    <text evidence="1">Phosphorylated in the absence of hormone; becomes hyperphosphorylated in the presence of glucocorticoids. May be dephosphorylated by PPP5C, attenuates NR3C1 action (By similarity).</text>
</comment>
<comment type="similarity">
    <text evidence="10">Belongs to the nuclear hormone receptor family. NR3 subfamily.</text>
</comment>
<feature type="chain" id="PRO_0000053679" description="Glucocorticoid receptor">
    <location>
        <begin position="1"/>
        <end position="758"/>
    </location>
</feature>
<feature type="domain" description="NR LBD" evidence="5">
    <location>
        <begin position="499"/>
        <end position="733"/>
    </location>
</feature>
<feature type="DNA-binding region" description="Nuclear receptor" evidence="4">
    <location>
        <begin position="387"/>
        <end position="461"/>
    </location>
</feature>
<feature type="zinc finger region" description="NR C4-type" evidence="4">
    <location>
        <begin position="387"/>
        <end position="407"/>
    </location>
</feature>
<feature type="zinc finger region" description="NR C4-type" evidence="4">
    <location>
        <begin position="432"/>
        <end position="456"/>
    </location>
</feature>
<feature type="region of interest" description="Modulating">
    <location>
        <begin position="1"/>
        <end position="386"/>
    </location>
</feature>
<feature type="region of interest" description="Disordered" evidence="6">
    <location>
        <begin position="1"/>
        <end position="61"/>
    </location>
</feature>
<feature type="region of interest" description="Disordered" evidence="6">
    <location>
        <begin position="349"/>
        <end position="382"/>
    </location>
</feature>
<feature type="region of interest" description="Hinge">
    <location>
        <begin position="462"/>
        <end position="498"/>
    </location>
</feature>
<feature type="compositionally biased region" description="Low complexity" evidence="6">
    <location>
        <begin position="26"/>
        <end position="42"/>
    </location>
</feature>
<feature type="splice variant" id="VSP_012542" description="In isoform 2." evidence="9">
    <location>
        <begin position="417"/>
        <end position="425"/>
    </location>
</feature>
<reference key="1">
    <citation type="journal article" date="1995" name="Endocrinology">
        <title>Cloning of a teleost fish glucocorticoid receptor shows that it contains a deoxyribonucleic acid-binding domain different from that of mammals.</title>
        <authorList>
            <person name="Ducouret B."/>
            <person name="Tujague M."/>
            <person name="Ashraf J."/>
            <person name="Mouchel N."/>
            <person name="Servel N."/>
            <person name="Valotaire Y."/>
            <person name="Thompson E.B."/>
        </authorList>
    </citation>
    <scope>NUCLEOTIDE SEQUENCE [MRNA] (ISOFORM 1)</scope>
    <scope>FUNCTION</scope>
    <scope>INTERACTION WITH STEROIDS</scope>
    <scope>TISSUE SPECIFICITY</scope>
    <source>
        <tissue>Liver</tissue>
    </source>
</reference>
<reference key="2">
    <citation type="journal article" date="1996" name="FEBS Lett.">
        <title>Fish glucocorticoid receptor with splicing variants in the DNA binding domain.</title>
        <authorList>
            <person name="Takeo J."/>
            <person name="Hata J."/>
            <person name="Segawa C."/>
            <person name="Toyohara H."/>
            <person name="Yamashita S."/>
        </authorList>
    </citation>
    <scope>NUCLEOTIDE SEQUENCE [MRNA] (ISOFORMS 1 AND 2)</scope>
    <scope>FUNCTION</scope>
    <scope>TISSUE SPECIFICITY</scope>
    <source>
        <tissue>Pituitary</tissue>
    </source>
</reference>
<dbReference type="EMBL" id="Z54210">
    <property type="protein sequence ID" value="CAA90937.1"/>
    <property type="molecule type" value="mRNA"/>
</dbReference>
<dbReference type="PIR" id="S60586">
    <property type="entry name" value="S60586"/>
</dbReference>
<dbReference type="RefSeq" id="NP_001118202.1">
    <molecule id="P49843-1"/>
    <property type="nucleotide sequence ID" value="NM_001124730.1"/>
</dbReference>
<dbReference type="SMR" id="P49843"/>
<dbReference type="GeneID" id="100136786"/>
<dbReference type="KEGG" id="omy:100136786"/>
<dbReference type="OrthoDB" id="5789523at2759"/>
<dbReference type="Proteomes" id="UP000694395">
    <property type="component" value="Unplaced"/>
</dbReference>
<dbReference type="GO" id="GO:1990794">
    <property type="term" value="C:basolateral part of cell"/>
    <property type="evidence" value="ECO:0000314"/>
    <property type="project" value="AgBase"/>
</dbReference>
<dbReference type="GO" id="GO:0005813">
    <property type="term" value="C:centrosome"/>
    <property type="evidence" value="ECO:0007669"/>
    <property type="project" value="UniProtKB-SubCell"/>
</dbReference>
<dbReference type="GO" id="GO:0005737">
    <property type="term" value="C:cytoplasm"/>
    <property type="evidence" value="ECO:0000314"/>
    <property type="project" value="AgBase"/>
</dbReference>
<dbReference type="GO" id="GO:0005739">
    <property type="term" value="C:mitochondrion"/>
    <property type="evidence" value="ECO:0007669"/>
    <property type="project" value="UniProtKB-SubCell"/>
</dbReference>
<dbReference type="GO" id="GO:0016607">
    <property type="term" value="C:nuclear speck"/>
    <property type="evidence" value="ECO:0000250"/>
    <property type="project" value="UniProtKB"/>
</dbReference>
<dbReference type="GO" id="GO:0005634">
    <property type="term" value="C:nucleus"/>
    <property type="evidence" value="ECO:0000314"/>
    <property type="project" value="AgBase"/>
</dbReference>
<dbReference type="GO" id="GO:0005819">
    <property type="term" value="C:spindle"/>
    <property type="evidence" value="ECO:0007669"/>
    <property type="project" value="UniProtKB-SubCell"/>
</dbReference>
<dbReference type="GO" id="GO:0001046">
    <property type="term" value="F:core promoter sequence-specific DNA binding"/>
    <property type="evidence" value="ECO:0000314"/>
    <property type="project" value="AgBase"/>
</dbReference>
<dbReference type="GO" id="GO:0003700">
    <property type="term" value="F:DNA-binding transcription factor activity"/>
    <property type="evidence" value="ECO:0000250"/>
    <property type="project" value="UniProtKB"/>
</dbReference>
<dbReference type="GO" id="GO:0098531">
    <property type="term" value="F:ligand-modulated transcription factor activity"/>
    <property type="evidence" value="ECO:0000314"/>
    <property type="project" value="AgBase"/>
</dbReference>
<dbReference type="GO" id="GO:0031963">
    <property type="term" value="F:nuclear cortisol receptor activity"/>
    <property type="evidence" value="ECO:0000314"/>
    <property type="project" value="AgBase"/>
</dbReference>
<dbReference type="GO" id="GO:0004883">
    <property type="term" value="F:nuclear glucocorticoid receptor activity"/>
    <property type="evidence" value="ECO:0000314"/>
    <property type="project" value="AgBase"/>
</dbReference>
<dbReference type="GO" id="GO:0004879">
    <property type="term" value="F:nuclear receptor activity"/>
    <property type="evidence" value="ECO:0000250"/>
    <property type="project" value="UniProtKB"/>
</dbReference>
<dbReference type="GO" id="GO:0043565">
    <property type="term" value="F:sequence-specific DNA binding"/>
    <property type="evidence" value="ECO:0000315"/>
    <property type="project" value="AgBase"/>
</dbReference>
<dbReference type="GO" id="GO:0005496">
    <property type="term" value="F:steroid binding"/>
    <property type="evidence" value="ECO:0000250"/>
    <property type="project" value="UniProtKB"/>
</dbReference>
<dbReference type="GO" id="GO:1990239">
    <property type="term" value="F:steroid hormone binding"/>
    <property type="evidence" value="ECO:0000314"/>
    <property type="project" value="AgBase"/>
</dbReference>
<dbReference type="GO" id="GO:0008270">
    <property type="term" value="F:zinc ion binding"/>
    <property type="evidence" value="ECO:0007669"/>
    <property type="project" value="UniProtKB-KW"/>
</dbReference>
<dbReference type="GO" id="GO:0071383">
    <property type="term" value="P:cellular response to steroid hormone stimulus"/>
    <property type="evidence" value="ECO:0000250"/>
    <property type="project" value="UniProtKB"/>
</dbReference>
<dbReference type="GO" id="GO:0006325">
    <property type="term" value="P:chromatin organization"/>
    <property type="evidence" value="ECO:0007669"/>
    <property type="project" value="UniProtKB-KW"/>
</dbReference>
<dbReference type="GO" id="GO:0010628">
    <property type="term" value="P:positive regulation of gene expression"/>
    <property type="evidence" value="ECO:0000314"/>
    <property type="project" value="AgBase"/>
</dbReference>
<dbReference type="GO" id="GO:0045944">
    <property type="term" value="P:positive regulation of transcription by RNA polymerase II"/>
    <property type="evidence" value="ECO:0000250"/>
    <property type="project" value="UniProtKB"/>
</dbReference>
<dbReference type="GO" id="GO:0046688">
    <property type="term" value="P:response to copper ion"/>
    <property type="evidence" value="ECO:0000314"/>
    <property type="project" value="AgBase"/>
</dbReference>
<dbReference type="GO" id="GO:0051414">
    <property type="term" value="P:response to cortisol"/>
    <property type="evidence" value="ECO:0000314"/>
    <property type="project" value="AgBase"/>
</dbReference>
<dbReference type="CDD" id="cd07172">
    <property type="entry name" value="NR_DBD_GR_PR"/>
    <property type="match status" value="1"/>
</dbReference>
<dbReference type="FunFam" id="1.10.565.10:FF:000004">
    <property type="entry name" value="Androgen receptor variant"/>
    <property type="match status" value="1"/>
</dbReference>
<dbReference type="FunFam" id="3.30.50.10:FF:000047">
    <property type="entry name" value="glucocorticoid receptor isoform X1"/>
    <property type="match status" value="1"/>
</dbReference>
<dbReference type="Gene3D" id="3.30.50.10">
    <property type="entry name" value="Erythroid Transcription Factor GATA-1, subunit A"/>
    <property type="match status" value="1"/>
</dbReference>
<dbReference type="Gene3D" id="1.10.565.10">
    <property type="entry name" value="Retinoid X Receptor"/>
    <property type="match status" value="1"/>
</dbReference>
<dbReference type="InterPro" id="IPR001409">
    <property type="entry name" value="Glcrtcd_rcpt"/>
</dbReference>
<dbReference type="InterPro" id="IPR035500">
    <property type="entry name" value="NHR-like_dom_sf"/>
</dbReference>
<dbReference type="InterPro" id="IPR000536">
    <property type="entry name" value="Nucl_hrmn_rcpt_lig-bd"/>
</dbReference>
<dbReference type="InterPro" id="IPR050200">
    <property type="entry name" value="Nuclear_hormone_rcpt_NR3"/>
</dbReference>
<dbReference type="InterPro" id="IPR001723">
    <property type="entry name" value="Nuclear_hrmn_rcpt"/>
</dbReference>
<dbReference type="InterPro" id="IPR001628">
    <property type="entry name" value="Znf_hrmn_rcpt"/>
</dbReference>
<dbReference type="InterPro" id="IPR013088">
    <property type="entry name" value="Znf_NHR/GATA"/>
</dbReference>
<dbReference type="PANTHER" id="PTHR48092">
    <property type="entry name" value="KNIRPS-RELATED PROTEIN-RELATED"/>
    <property type="match status" value="1"/>
</dbReference>
<dbReference type="Pfam" id="PF02155">
    <property type="entry name" value="GCR"/>
    <property type="match status" value="1"/>
</dbReference>
<dbReference type="Pfam" id="PF00104">
    <property type="entry name" value="Hormone_recep"/>
    <property type="match status" value="1"/>
</dbReference>
<dbReference type="Pfam" id="PF00105">
    <property type="entry name" value="zf-C4"/>
    <property type="match status" value="1"/>
</dbReference>
<dbReference type="PRINTS" id="PR00398">
    <property type="entry name" value="STRDHORMONER"/>
</dbReference>
<dbReference type="PRINTS" id="PR00047">
    <property type="entry name" value="STROIDFINGER"/>
</dbReference>
<dbReference type="SMART" id="SM00430">
    <property type="entry name" value="HOLI"/>
    <property type="match status" value="1"/>
</dbReference>
<dbReference type="SMART" id="SM00399">
    <property type="entry name" value="ZnF_C4"/>
    <property type="match status" value="1"/>
</dbReference>
<dbReference type="SUPFAM" id="SSF57716">
    <property type="entry name" value="Glucocorticoid receptor-like (DNA-binding domain)"/>
    <property type="match status" value="1"/>
</dbReference>
<dbReference type="SUPFAM" id="SSF48508">
    <property type="entry name" value="Nuclear receptor ligand-binding domain"/>
    <property type="match status" value="1"/>
</dbReference>
<dbReference type="PROSITE" id="PS51843">
    <property type="entry name" value="NR_LBD"/>
    <property type="match status" value="1"/>
</dbReference>
<dbReference type="PROSITE" id="PS00031">
    <property type="entry name" value="NUCLEAR_REC_DBD_1"/>
    <property type="match status" value="1"/>
</dbReference>
<dbReference type="PROSITE" id="PS51030">
    <property type="entry name" value="NUCLEAR_REC_DBD_2"/>
    <property type="match status" value="1"/>
</dbReference>
<name>GCR_ONCMY</name>
<evidence type="ECO:0000250" key="1"/>
<evidence type="ECO:0000250" key="2">
    <source>
        <dbReference type="UniProtKB" id="P04150"/>
    </source>
</evidence>
<evidence type="ECO:0000250" key="3">
    <source>
        <dbReference type="UniProtKB" id="P06537"/>
    </source>
</evidence>
<evidence type="ECO:0000255" key="4">
    <source>
        <dbReference type="PROSITE-ProRule" id="PRU00407"/>
    </source>
</evidence>
<evidence type="ECO:0000255" key="5">
    <source>
        <dbReference type="PROSITE-ProRule" id="PRU01189"/>
    </source>
</evidence>
<evidence type="ECO:0000256" key="6">
    <source>
        <dbReference type="SAM" id="MobiDB-lite"/>
    </source>
</evidence>
<evidence type="ECO:0000269" key="7">
    <source>
    </source>
</evidence>
<evidence type="ECO:0000269" key="8">
    <source>
    </source>
</evidence>
<evidence type="ECO:0000303" key="9">
    <source>
    </source>
</evidence>
<evidence type="ECO:0000305" key="10"/>
<keyword id="KW-0025">Alternative splicing</keyword>
<keyword id="KW-0156">Chromatin regulator</keyword>
<keyword id="KW-0963">Cytoplasm</keyword>
<keyword id="KW-0206">Cytoskeleton</keyword>
<keyword id="KW-0238">DNA-binding</keyword>
<keyword id="KW-0446">Lipid-binding</keyword>
<keyword id="KW-0479">Metal-binding</keyword>
<keyword id="KW-0496">Mitochondrion</keyword>
<keyword id="KW-0539">Nucleus</keyword>
<keyword id="KW-0675">Receptor</keyword>
<keyword id="KW-0754">Steroid-binding</keyword>
<keyword id="KW-0804">Transcription</keyword>
<keyword id="KW-0805">Transcription regulation</keyword>
<keyword id="KW-0862">Zinc</keyword>
<keyword id="KW-0863">Zinc-finger</keyword>